<comment type="function">
    <text evidence="2">The central subunit of the protein translocation channel SecYEG. Consists of two halves formed by TMs 1-5 and 6-10. These two domains form a lateral gate at the front which open onto the bilayer between TMs 2 and 7, and are clamped together by SecE at the back. The channel is closed by both a pore ring composed of hydrophobic SecY resides and a short helix (helix 2A) on the extracellular side of the membrane which forms a plug. The plug probably moves laterally to allow the channel to open. The ring and the pore may move independently.</text>
</comment>
<comment type="subunit">
    <text evidence="2">Component of the Sec protein translocase complex. Heterotrimer consisting of alpha (SecY), beta (SecG) and gamma (SecE) subunits. The heterotrimers can form oligomers, although 1 heterotrimer is thought to be able to translocate proteins. Interacts with the ribosome. May interact with SecDF, and other proteins may be involved.</text>
</comment>
<comment type="subcellular location">
    <subcellularLocation>
        <location evidence="2">Cell membrane</location>
        <topology evidence="2">Multi-pass membrane protein</topology>
    </subcellularLocation>
</comment>
<comment type="similarity">
    <text evidence="2">Belongs to the SecY/SEC61-alpha family.</text>
</comment>
<name>SECY_METVA</name>
<protein>
    <recommendedName>
        <fullName evidence="2">Protein translocase subunit SecY</fullName>
    </recommendedName>
    <alternativeName>
        <fullName evidence="2">Protein transport protein SEC61 subunit alpha homolog</fullName>
    </alternativeName>
</protein>
<sequence>MKIKPILELIPEVKRPLKGVSFKEKIQWTGLVLILYFILGTIDIYMGGAEMPAMFAFWQTVTASKMGTLITLGIGPIVTAGIIMQLLVGSELISLDLSKPMNRALFQGLQKLFGIFLCFLEAVMFVGAGAFGVVNSTLALILVLQLALGAILVIYLDEIVSRYGIGSGIGLFIAAGVAQTIFVGAFGAEGYLWKFFSAMSVGSLGIAFEYILPILSTLFVFLVVVYVESIRVEIPLAHGRVKGAVGKYPIKFIYVSNLPVILAAALFANIQLWGMFLDRMGYPILGQYSNGTAVSGIAYYFSTPYGISNIISDPLHAIFYTLMMVIFCILFGLFWVETSGLDAKSMAKKLGNLDMAIKGFRKSQKSIEQRLKRYIKPITVMGSAFVGFLAAAADFTGALGGGTGVLLTVSIVYRLYEQLVQEQLSELHPAVAKFVGKR</sequence>
<gene>
    <name evidence="2" type="primary">secY</name>
</gene>
<reference key="1">
    <citation type="journal article" date="1991" name="Biochimie">
        <title>Presence of a gene in the archaebacterium Methanococcus vannielii homologous to secY of eubacteria.</title>
        <authorList>
            <person name="Auer J."/>
            <person name="Spicker G."/>
            <person name="Boeck A."/>
        </authorList>
    </citation>
    <scope>NUCLEOTIDE SEQUENCE [GENOMIC DNA]</scope>
</reference>
<keyword id="KW-1003">Cell membrane</keyword>
<keyword id="KW-0472">Membrane</keyword>
<keyword id="KW-0653">Protein transport</keyword>
<keyword id="KW-0811">Translocation</keyword>
<keyword id="KW-0812">Transmembrane</keyword>
<keyword id="KW-1133">Transmembrane helix</keyword>
<keyword id="KW-0813">Transport</keyword>
<proteinExistence type="inferred from homology"/>
<evidence type="ECO:0000250" key="1"/>
<evidence type="ECO:0000255" key="2">
    <source>
        <dbReference type="HAMAP-Rule" id="MF_01465"/>
    </source>
</evidence>
<organism>
    <name type="scientific">Methanococcus vannielii</name>
    <dbReference type="NCBI Taxonomy" id="2187"/>
    <lineage>
        <taxon>Archaea</taxon>
        <taxon>Methanobacteriati</taxon>
        <taxon>Methanobacteriota</taxon>
        <taxon>Methanomada group</taxon>
        <taxon>Methanococci</taxon>
        <taxon>Methanococcales</taxon>
        <taxon>Methanococcaceae</taxon>
        <taxon>Methanococcus</taxon>
    </lineage>
</organism>
<dbReference type="EMBL" id="X62045">
    <property type="protein sequence ID" value="CAA43978.1"/>
    <property type="molecule type" value="Genomic_DNA"/>
</dbReference>
<dbReference type="PIR" id="S24065">
    <property type="entry name" value="S24065"/>
</dbReference>
<dbReference type="SMR" id="P28541"/>
<dbReference type="GO" id="GO:0005886">
    <property type="term" value="C:plasma membrane"/>
    <property type="evidence" value="ECO:0007669"/>
    <property type="project" value="UniProtKB-SubCell"/>
</dbReference>
<dbReference type="GO" id="GO:0065002">
    <property type="term" value="P:intracellular protein transmembrane transport"/>
    <property type="evidence" value="ECO:0007669"/>
    <property type="project" value="UniProtKB-UniRule"/>
</dbReference>
<dbReference type="GO" id="GO:0006605">
    <property type="term" value="P:protein targeting"/>
    <property type="evidence" value="ECO:0007669"/>
    <property type="project" value="UniProtKB-UniRule"/>
</dbReference>
<dbReference type="Gene3D" id="1.10.3370.10">
    <property type="entry name" value="SecY subunit domain"/>
    <property type="match status" value="1"/>
</dbReference>
<dbReference type="HAMAP" id="MF_01465">
    <property type="entry name" value="SecY"/>
    <property type="match status" value="1"/>
</dbReference>
<dbReference type="InterPro" id="IPR026593">
    <property type="entry name" value="SecY"/>
</dbReference>
<dbReference type="InterPro" id="IPR002208">
    <property type="entry name" value="SecY/SEC61-alpha"/>
</dbReference>
<dbReference type="InterPro" id="IPR030659">
    <property type="entry name" value="SecY_CS"/>
</dbReference>
<dbReference type="InterPro" id="IPR023201">
    <property type="entry name" value="SecY_dom_sf"/>
</dbReference>
<dbReference type="NCBIfam" id="TIGR00967">
    <property type="entry name" value="3a0501s007"/>
    <property type="match status" value="1"/>
</dbReference>
<dbReference type="NCBIfam" id="NF006341">
    <property type="entry name" value="PRK08568.1-5"/>
    <property type="match status" value="1"/>
</dbReference>
<dbReference type="PANTHER" id="PTHR10906">
    <property type="entry name" value="SECY/SEC61-ALPHA FAMILY MEMBER"/>
    <property type="match status" value="1"/>
</dbReference>
<dbReference type="Pfam" id="PF00344">
    <property type="entry name" value="SecY"/>
    <property type="match status" value="1"/>
</dbReference>
<dbReference type="PIRSF" id="PIRSF004557">
    <property type="entry name" value="SecY"/>
    <property type="match status" value="1"/>
</dbReference>
<dbReference type="PRINTS" id="PR00303">
    <property type="entry name" value="SECYTRNLCASE"/>
</dbReference>
<dbReference type="SUPFAM" id="SSF103491">
    <property type="entry name" value="Preprotein translocase SecY subunit"/>
    <property type="match status" value="1"/>
</dbReference>
<dbReference type="PROSITE" id="PS00755">
    <property type="entry name" value="SECY_1"/>
    <property type="match status" value="1"/>
</dbReference>
<dbReference type="PROSITE" id="PS00756">
    <property type="entry name" value="SECY_2"/>
    <property type="match status" value="1"/>
</dbReference>
<accession>P28541</accession>
<feature type="chain" id="PRO_0000131766" description="Protein translocase subunit SecY">
    <location>
        <begin position="1"/>
        <end position="438"/>
    </location>
</feature>
<feature type="transmembrane region" description="Helical; Name=Helix 1" evidence="2">
    <location>
        <begin position="1"/>
        <end position="43"/>
    </location>
</feature>
<feature type="topological domain" description="Extracellular" evidence="1">
    <location>
        <begin position="44"/>
        <end position="54"/>
    </location>
</feature>
<feature type="transmembrane region" description="Discontinuously helical; Name=Helix 2" evidence="1">
    <location>
        <begin position="55"/>
        <end position="83"/>
    </location>
</feature>
<feature type="intramembrane region" description="Helical; Name=Helix 2A" evidence="1">
    <location>
        <begin position="55"/>
        <end position="62"/>
    </location>
</feature>
<feature type="intramembrane region" evidence="1">
    <location>
        <begin position="63"/>
        <end position="74"/>
    </location>
</feature>
<feature type="intramembrane region" description="Helical; Name=Helix 2B" evidence="1">
    <location>
        <begin position="75"/>
        <end position="83"/>
    </location>
</feature>
<feature type="topological domain" description="Cytoplasmic" evidence="1">
    <location>
        <begin position="84"/>
        <end position="104"/>
    </location>
</feature>
<feature type="transmembrane region" description="Helical; Name=Helix 3" evidence="2">
    <location>
        <begin position="105"/>
        <end position="129"/>
    </location>
</feature>
<feature type="topological domain" description="Extracellular" evidence="1">
    <location>
        <begin position="130"/>
        <end position="136"/>
    </location>
</feature>
<feature type="transmembrane region" description="Helical; Name=Helix 4" evidence="2">
    <location>
        <begin position="137"/>
        <end position="161"/>
    </location>
</feature>
<feature type="topological domain" description="Cytoplasmic" evidence="1">
    <location>
        <begin position="162"/>
        <end position="167"/>
    </location>
</feature>
<feature type="transmembrane region" description="Helical; Name=Helix 5" evidence="2">
    <location>
        <begin position="168"/>
        <end position="186"/>
    </location>
</feature>
<feature type="topological domain" description="Extracellular" evidence="1">
    <location>
        <begin position="187"/>
        <end position="209"/>
    </location>
</feature>
<feature type="transmembrane region" description="Helical; Name=Helix 6" evidence="2">
    <location>
        <begin position="210"/>
        <end position="231"/>
    </location>
</feature>
<feature type="topological domain" description="Cytoplasmic" evidence="1">
    <location>
        <begin position="232"/>
        <end position="256"/>
    </location>
</feature>
<feature type="transmembrane region" description="Helical; Name=Helix 7" evidence="2">
    <location>
        <begin position="257"/>
        <end position="278"/>
    </location>
</feature>
<feature type="topological domain" description="Extracellular" evidence="1">
    <location>
        <begin position="279"/>
        <end position="315"/>
    </location>
</feature>
<feature type="transmembrane region" description="Helical; Name=Helix 8" evidence="2">
    <location>
        <begin position="316"/>
        <end position="335"/>
    </location>
</feature>
<feature type="topological domain" description="Cytoplasmic" evidence="1">
    <location>
        <begin position="336"/>
        <end position="378"/>
    </location>
</feature>
<feature type="transmembrane region" description="Helical; Name=Helix 9" evidence="2">
    <location>
        <begin position="379"/>
        <end position="397"/>
    </location>
</feature>
<feature type="topological domain" description="Extracellular" evidence="1">
    <location>
        <begin position="398"/>
        <end position="400"/>
    </location>
</feature>
<feature type="transmembrane region" description="Helical; Name=Helix 10" evidence="2">
    <location>
        <begin position="401"/>
        <end position="415"/>
    </location>
</feature>
<feature type="topological domain" description="Cytoplasmic" evidence="1">
    <location>
        <begin position="416"/>
        <end position="438"/>
    </location>
</feature>